<gene>
    <name evidence="13" type="primary">BROX</name>
    <name type="synonym">BROFTI</name>
    <name type="synonym">C1orf58</name>
</gene>
<comment type="function">
    <text evidence="7">Nuclear envelope-associated factor that is involved in the nuclear envelope ruptures during interphase (NERDI) repair, where it is locally recruited by CHMP5 and reduces cytoskeletal stress through its action on SYN2 to help reseal the ruptured membrane.</text>
</comment>
<comment type="subunit">
    <text evidence="4 5 6 7">Monomer (PubMed:22162750). Interacts with CHMP4B (PubMed:18190528, PubMed:22162750, PubMed:22484091, PubMed:34818527). Interacts with CHMP5: this interaction allows the recruitment of BROX to cellular membranes (PubMed:22484091). Interacts with SYN2; this interaction promotes SYN2 ubiquitination and facilitates the relaxation of mechanical stress imposed by compressive actin fibers at the rupture site (PubMed:34818527).</text>
</comment>
<comment type="interaction">
    <interactant intactId="EBI-6286053">
        <id>Q5VW32</id>
    </interactant>
    <interactant intactId="EBI-749627">
        <id>Q9H444</id>
        <label>CHMP4B</label>
    </interactant>
    <organismsDiffer>false</organismsDiffer>
    <experiments>5</experiments>
</comment>
<comment type="interaction">
    <interactant intactId="EBI-6286053">
        <id>Q5VW32</id>
    </interactant>
    <interactant intactId="EBI-15979532">
        <id>Q9NZZ3-1</id>
        <label>CHMP5</label>
    </interactant>
    <organismsDiffer>false</organismsDiffer>
    <experiments>6</experiments>
</comment>
<comment type="interaction">
    <interactant intactId="EBI-6286053">
        <id>Q5VW32</id>
    </interactant>
    <interactant intactId="EBI-2608271">
        <id>P23193</id>
        <label>TCEA1</label>
    </interactant>
    <organismsDiffer>false</organismsDiffer>
    <experiments>2</experiments>
</comment>
<comment type="subcellular location">
    <subcellularLocation>
        <location evidence="12">Nucleus membrane</location>
        <topology evidence="11">Lipid-anchor</topology>
    </subcellularLocation>
    <text evidence="7">During nuclear envelope repair, localizes at rupture sites where it is recruited by the CHMP7/ESCRT-III axis.</text>
</comment>
<comment type="alternative products">
    <event type="alternative splicing"/>
    <isoform>
        <id>Q5VW32-1</id>
        <name>1</name>
        <sequence type="displayed"/>
    </isoform>
    <isoform>
        <id>Q5VW32-2</id>
        <name>2</name>
        <sequence type="described" ref="VSP_055551"/>
    </isoform>
</comment>
<comment type="PTM">
    <text evidence="7">Farnesylation is required for nuclear envelope localization.</text>
</comment>
<comment type="similarity">
    <text evidence="10">Belongs to the BROX family.</text>
</comment>
<accession>Q5VW32</accession>
<accession>B7Z9G5</accession>
<accession>Q96MG1</accession>
<organism>
    <name type="scientific">Homo sapiens</name>
    <name type="common">Human</name>
    <dbReference type="NCBI Taxonomy" id="9606"/>
    <lineage>
        <taxon>Eukaryota</taxon>
        <taxon>Metazoa</taxon>
        <taxon>Chordata</taxon>
        <taxon>Craniata</taxon>
        <taxon>Vertebrata</taxon>
        <taxon>Euteleostomi</taxon>
        <taxon>Mammalia</taxon>
        <taxon>Eutheria</taxon>
        <taxon>Euarchontoglires</taxon>
        <taxon>Primates</taxon>
        <taxon>Haplorrhini</taxon>
        <taxon>Catarrhini</taxon>
        <taxon>Hominidae</taxon>
        <taxon>Homo</taxon>
    </lineage>
</organism>
<name>BROX_HUMAN</name>
<sequence length="411" mass="46476">MTHWFHRNPLKATAPVSFNYYGVVTGPSASKICNDLRSSRARLLELFTDLSCNPEMMKNAADSYFSLLQGFINSLDESTQESKLRYIQNFKWTDTLQGQVPSAQQDAVFELISMGFNVALWYTKYASRLAGKENITEDEAKEVHRSLKIAAGIFKHLKESHLPKLITPAEKGRDLESRLIEAYVIQCQAEAQEVTIARAIELKHAPGLIAALAYETANFYQKADHTLSSLEPAYSAKWRKYLHLKMCFYTAYAYCYHGETLLASDKCGEAIRSLQEAEKLYAKAEALCKEYGETKGPGPTVKPSGHLFFRKLGNLVKNTLEKCQRENGFIYFQKIPTEAPQLELKANYGLVEPIPFEFPPTSVQWTPETLAAFDLTKRPKDDSTKPKPEEEVKPVKEPDIKPQKDTGCYIS</sequence>
<protein>
    <recommendedName>
        <fullName evidence="10">BRO1 domain-containing protein BROX</fullName>
    </recommendedName>
    <alternativeName>
        <fullName>BRO1 domain- and CAAX motif-containing protein</fullName>
    </alternativeName>
</protein>
<evidence type="ECO:0000255" key="1">
    <source>
        <dbReference type="PROSITE-ProRule" id="PRU00526"/>
    </source>
</evidence>
<evidence type="ECO:0000256" key="2">
    <source>
        <dbReference type="SAM" id="MobiDB-lite"/>
    </source>
</evidence>
<evidence type="ECO:0000269" key="3">
    <source>
    </source>
</evidence>
<evidence type="ECO:0000269" key="4">
    <source>
    </source>
</evidence>
<evidence type="ECO:0000269" key="5">
    <source>
    </source>
</evidence>
<evidence type="ECO:0000269" key="6">
    <source>
    </source>
</evidence>
<evidence type="ECO:0000269" key="7">
    <source>
    </source>
</evidence>
<evidence type="ECO:0000303" key="8">
    <source>
    </source>
</evidence>
<evidence type="ECO:0000303" key="9">
    <source>
    </source>
</evidence>
<evidence type="ECO:0000305" key="10"/>
<evidence type="ECO:0000305" key="11">
    <source>
    </source>
</evidence>
<evidence type="ECO:0000305" key="12">
    <source>
    </source>
</evidence>
<evidence type="ECO:0000312" key="13">
    <source>
        <dbReference type="HGNC" id="HGNC:26512"/>
    </source>
</evidence>
<evidence type="ECO:0007744" key="14">
    <source>
        <dbReference type="PDB" id="3R9M"/>
    </source>
</evidence>
<evidence type="ECO:0007744" key="15">
    <source>
        <dbReference type="PDB" id="3ULY"/>
    </source>
</evidence>
<evidence type="ECO:0007744" key="16">
    <source>
        <dbReference type="PDB" id="3UM0"/>
    </source>
</evidence>
<evidence type="ECO:0007744" key="17">
    <source>
        <dbReference type="PDB" id="3UM1"/>
    </source>
</evidence>
<evidence type="ECO:0007744" key="18">
    <source>
        <dbReference type="PDB" id="3UM2"/>
    </source>
</evidence>
<evidence type="ECO:0007744" key="19">
    <source>
        <dbReference type="PDB" id="3UM3"/>
    </source>
</evidence>
<evidence type="ECO:0007744" key="20">
    <source>
        <dbReference type="PDB" id="3ZXP"/>
    </source>
</evidence>
<evidence type="ECO:0007744" key="21">
    <source>
    </source>
</evidence>
<evidence type="ECO:0007829" key="22">
    <source>
        <dbReference type="PDB" id="3R9M"/>
    </source>
</evidence>
<evidence type="ECO:0007829" key="23">
    <source>
        <dbReference type="PDB" id="3ULY"/>
    </source>
</evidence>
<evidence type="ECO:0007829" key="24">
    <source>
        <dbReference type="PDB" id="3ZXP"/>
    </source>
</evidence>
<reference key="1">
    <citation type="journal article" date="2008" name="FEBS J.">
        <title>Brox, a novel farnesylated Bro1 domain-containing protein that associates with charged multivesicular body protein 4 (CHMP4).</title>
        <authorList>
            <person name="Ichioka F."/>
            <person name="Kobayashi R."/>
            <person name="Katoh K."/>
            <person name="Shibata H."/>
            <person name="Maki M."/>
        </authorList>
    </citation>
    <scope>NUCLEOTIDE SEQUENCE [MRNA] (ISOFORM 1)</scope>
    <scope>ISOPRENYLATION AT CYS-408</scope>
    <scope>METHYLATION AT CYS-408</scope>
    <scope>INTERACTION WITH CHMP4B</scope>
    <source>
        <tissue>Cervix carcinoma</tissue>
    </source>
</reference>
<reference key="2">
    <citation type="journal article" date="2004" name="Nat. Genet.">
        <title>Complete sequencing and characterization of 21,243 full-length human cDNAs.</title>
        <authorList>
            <person name="Ota T."/>
            <person name="Suzuki Y."/>
            <person name="Nishikawa T."/>
            <person name="Otsuki T."/>
            <person name="Sugiyama T."/>
            <person name="Irie R."/>
            <person name="Wakamatsu A."/>
            <person name="Hayashi K."/>
            <person name="Sato H."/>
            <person name="Nagai K."/>
            <person name="Kimura K."/>
            <person name="Makita H."/>
            <person name="Sekine M."/>
            <person name="Obayashi M."/>
            <person name="Nishi T."/>
            <person name="Shibahara T."/>
            <person name="Tanaka T."/>
            <person name="Ishii S."/>
            <person name="Yamamoto J."/>
            <person name="Saito K."/>
            <person name="Kawai Y."/>
            <person name="Isono Y."/>
            <person name="Nakamura Y."/>
            <person name="Nagahari K."/>
            <person name="Murakami K."/>
            <person name="Yasuda T."/>
            <person name="Iwayanagi T."/>
            <person name="Wagatsuma M."/>
            <person name="Shiratori A."/>
            <person name="Sudo H."/>
            <person name="Hosoiri T."/>
            <person name="Kaku Y."/>
            <person name="Kodaira H."/>
            <person name="Kondo H."/>
            <person name="Sugawara M."/>
            <person name="Takahashi M."/>
            <person name="Kanda K."/>
            <person name="Yokoi T."/>
            <person name="Furuya T."/>
            <person name="Kikkawa E."/>
            <person name="Omura Y."/>
            <person name="Abe K."/>
            <person name="Kamihara K."/>
            <person name="Katsuta N."/>
            <person name="Sato K."/>
            <person name="Tanikawa M."/>
            <person name="Yamazaki M."/>
            <person name="Ninomiya K."/>
            <person name="Ishibashi T."/>
            <person name="Yamashita H."/>
            <person name="Murakawa K."/>
            <person name="Fujimori K."/>
            <person name="Tanai H."/>
            <person name="Kimata M."/>
            <person name="Watanabe M."/>
            <person name="Hiraoka S."/>
            <person name="Chiba Y."/>
            <person name="Ishida S."/>
            <person name="Ono Y."/>
            <person name="Takiguchi S."/>
            <person name="Watanabe S."/>
            <person name="Yosida M."/>
            <person name="Hotuta T."/>
            <person name="Kusano J."/>
            <person name="Kanehori K."/>
            <person name="Takahashi-Fujii A."/>
            <person name="Hara H."/>
            <person name="Tanase T.-O."/>
            <person name="Nomura Y."/>
            <person name="Togiya S."/>
            <person name="Komai F."/>
            <person name="Hara R."/>
            <person name="Takeuchi K."/>
            <person name="Arita M."/>
            <person name="Imose N."/>
            <person name="Musashino K."/>
            <person name="Yuuki H."/>
            <person name="Oshima A."/>
            <person name="Sasaki N."/>
            <person name="Aotsuka S."/>
            <person name="Yoshikawa Y."/>
            <person name="Matsunawa H."/>
            <person name="Ichihara T."/>
            <person name="Shiohata N."/>
            <person name="Sano S."/>
            <person name="Moriya S."/>
            <person name="Momiyama H."/>
            <person name="Satoh N."/>
            <person name="Takami S."/>
            <person name="Terashima Y."/>
            <person name="Suzuki O."/>
            <person name="Nakagawa S."/>
            <person name="Senoh A."/>
            <person name="Mizoguchi H."/>
            <person name="Goto Y."/>
            <person name="Shimizu F."/>
            <person name="Wakebe H."/>
            <person name="Hishigaki H."/>
            <person name="Watanabe T."/>
            <person name="Sugiyama A."/>
            <person name="Takemoto M."/>
            <person name="Kawakami B."/>
            <person name="Yamazaki M."/>
            <person name="Watanabe K."/>
            <person name="Kumagai A."/>
            <person name="Itakura S."/>
            <person name="Fukuzumi Y."/>
            <person name="Fujimori Y."/>
            <person name="Komiyama M."/>
            <person name="Tashiro H."/>
            <person name="Tanigami A."/>
            <person name="Fujiwara T."/>
            <person name="Ono T."/>
            <person name="Yamada K."/>
            <person name="Fujii Y."/>
            <person name="Ozaki K."/>
            <person name="Hirao M."/>
            <person name="Ohmori Y."/>
            <person name="Kawabata A."/>
            <person name="Hikiji T."/>
            <person name="Kobatake N."/>
            <person name="Inagaki H."/>
            <person name="Ikema Y."/>
            <person name="Okamoto S."/>
            <person name="Okitani R."/>
            <person name="Kawakami T."/>
            <person name="Noguchi S."/>
            <person name="Itoh T."/>
            <person name="Shigeta K."/>
            <person name="Senba T."/>
            <person name="Matsumura K."/>
            <person name="Nakajima Y."/>
            <person name="Mizuno T."/>
            <person name="Morinaga M."/>
            <person name="Sasaki M."/>
            <person name="Togashi T."/>
            <person name="Oyama M."/>
            <person name="Hata H."/>
            <person name="Watanabe M."/>
            <person name="Komatsu T."/>
            <person name="Mizushima-Sugano J."/>
            <person name="Satoh T."/>
            <person name="Shirai Y."/>
            <person name="Takahashi Y."/>
            <person name="Nakagawa K."/>
            <person name="Okumura K."/>
            <person name="Nagase T."/>
            <person name="Nomura N."/>
            <person name="Kikuchi H."/>
            <person name="Masuho Y."/>
            <person name="Yamashita R."/>
            <person name="Nakai K."/>
            <person name="Yada T."/>
            <person name="Nakamura Y."/>
            <person name="Ohara O."/>
            <person name="Isogai T."/>
            <person name="Sugano S."/>
        </authorList>
    </citation>
    <scope>NUCLEOTIDE SEQUENCE [LARGE SCALE MRNA] (ISOFORMS 1 AND 2)</scope>
    <source>
        <tissue>Cerebellum</tissue>
        <tissue>Skeletal muscle</tissue>
    </source>
</reference>
<reference key="3">
    <citation type="journal article" date="2006" name="Nature">
        <title>The DNA sequence and biological annotation of human chromosome 1.</title>
        <authorList>
            <person name="Gregory S.G."/>
            <person name="Barlow K.F."/>
            <person name="McLay K.E."/>
            <person name="Kaul R."/>
            <person name="Swarbreck D."/>
            <person name="Dunham A."/>
            <person name="Scott C.E."/>
            <person name="Howe K.L."/>
            <person name="Woodfine K."/>
            <person name="Spencer C.C.A."/>
            <person name="Jones M.C."/>
            <person name="Gillson C."/>
            <person name="Searle S."/>
            <person name="Zhou Y."/>
            <person name="Kokocinski F."/>
            <person name="McDonald L."/>
            <person name="Evans R."/>
            <person name="Phillips K."/>
            <person name="Atkinson A."/>
            <person name="Cooper R."/>
            <person name="Jones C."/>
            <person name="Hall R.E."/>
            <person name="Andrews T.D."/>
            <person name="Lloyd C."/>
            <person name="Ainscough R."/>
            <person name="Almeida J.P."/>
            <person name="Ambrose K.D."/>
            <person name="Anderson F."/>
            <person name="Andrew R.W."/>
            <person name="Ashwell R.I.S."/>
            <person name="Aubin K."/>
            <person name="Babbage A.K."/>
            <person name="Bagguley C.L."/>
            <person name="Bailey J."/>
            <person name="Beasley H."/>
            <person name="Bethel G."/>
            <person name="Bird C.P."/>
            <person name="Bray-Allen S."/>
            <person name="Brown J.Y."/>
            <person name="Brown A.J."/>
            <person name="Buckley D."/>
            <person name="Burton J."/>
            <person name="Bye J."/>
            <person name="Carder C."/>
            <person name="Chapman J.C."/>
            <person name="Clark S.Y."/>
            <person name="Clarke G."/>
            <person name="Clee C."/>
            <person name="Cobley V."/>
            <person name="Collier R.E."/>
            <person name="Corby N."/>
            <person name="Coville G.J."/>
            <person name="Davies J."/>
            <person name="Deadman R."/>
            <person name="Dunn M."/>
            <person name="Earthrowl M."/>
            <person name="Ellington A.G."/>
            <person name="Errington H."/>
            <person name="Frankish A."/>
            <person name="Frankland J."/>
            <person name="French L."/>
            <person name="Garner P."/>
            <person name="Garnett J."/>
            <person name="Gay L."/>
            <person name="Ghori M.R.J."/>
            <person name="Gibson R."/>
            <person name="Gilby L.M."/>
            <person name="Gillett W."/>
            <person name="Glithero R.J."/>
            <person name="Grafham D.V."/>
            <person name="Griffiths C."/>
            <person name="Griffiths-Jones S."/>
            <person name="Grocock R."/>
            <person name="Hammond S."/>
            <person name="Harrison E.S.I."/>
            <person name="Hart E."/>
            <person name="Haugen E."/>
            <person name="Heath P.D."/>
            <person name="Holmes S."/>
            <person name="Holt K."/>
            <person name="Howden P.J."/>
            <person name="Hunt A.R."/>
            <person name="Hunt S.E."/>
            <person name="Hunter G."/>
            <person name="Isherwood J."/>
            <person name="James R."/>
            <person name="Johnson C."/>
            <person name="Johnson D."/>
            <person name="Joy A."/>
            <person name="Kay M."/>
            <person name="Kershaw J.K."/>
            <person name="Kibukawa M."/>
            <person name="Kimberley A.M."/>
            <person name="King A."/>
            <person name="Knights A.J."/>
            <person name="Lad H."/>
            <person name="Laird G."/>
            <person name="Lawlor S."/>
            <person name="Leongamornlert D.A."/>
            <person name="Lloyd D.M."/>
            <person name="Loveland J."/>
            <person name="Lovell J."/>
            <person name="Lush M.J."/>
            <person name="Lyne R."/>
            <person name="Martin S."/>
            <person name="Mashreghi-Mohammadi M."/>
            <person name="Matthews L."/>
            <person name="Matthews N.S.W."/>
            <person name="McLaren S."/>
            <person name="Milne S."/>
            <person name="Mistry S."/>
            <person name="Moore M.J.F."/>
            <person name="Nickerson T."/>
            <person name="O'Dell C.N."/>
            <person name="Oliver K."/>
            <person name="Palmeiri A."/>
            <person name="Palmer S.A."/>
            <person name="Parker A."/>
            <person name="Patel D."/>
            <person name="Pearce A.V."/>
            <person name="Peck A.I."/>
            <person name="Pelan S."/>
            <person name="Phelps K."/>
            <person name="Phillimore B.J."/>
            <person name="Plumb R."/>
            <person name="Rajan J."/>
            <person name="Raymond C."/>
            <person name="Rouse G."/>
            <person name="Saenphimmachak C."/>
            <person name="Sehra H.K."/>
            <person name="Sheridan E."/>
            <person name="Shownkeen R."/>
            <person name="Sims S."/>
            <person name="Skuce C.D."/>
            <person name="Smith M."/>
            <person name="Steward C."/>
            <person name="Subramanian S."/>
            <person name="Sycamore N."/>
            <person name="Tracey A."/>
            <person name="Tromans A."/>
            <person name="Van Helmond Z."/>
            <person name="Wall M."/>
            <person name="Wallis J.M."/>
            <person name="White S."/>
            <person name="Whitehead S.L."/>
            <person name="Wilkinson J.E."/>
            <person name="Willey D.L."/>
            <person name="Williams H."/>
            <person name="Wilming L."/>
            <person name="Wray P.W."/>
            <person name="Wu Z."/>
            <person name="Coulson A."/>
            <person name="Vaudin M."/>
            <person name="Sulston J.E."/>
            <person name="Durbin R.M."/>
            <person name="Hubbard T."/>
            <person name="Wooster R."/>
            <person name="Dunham I."/>
            <person name="Carter N.P."/>
            <person name="McVean G."/>
            <person name="Ross M.T."/>
            <person name="Harrow J."/>
            <person name="Olson M.V."/>
            <person name="Beck S."/>
            <person name="Rogers J."/>
            <person name="Bentley D.R."/>
        </authorList>
    </citation>
    <scope>NUCLEOTIDE SEQUENCE [LARGE SCALE GENOMIC DNA]</scope>
</reference>
<reference key="4">
    <citation type="submission" date="2005-09" db="EMBL/GenBank/DDBJ databases">
        <authorList>
            <person name="Mural R.J."/>
            <person name="Istrail S."/>
            <person name="Sutton G.G."/>
            <person name="Florea L."/>
            <person name="Halpern A.L."/>
            <person name="Mobarry C.M."/>
            <person name="Lippert R."/>
            <person name="Walenz B."/>
            <person name="Shatkay H."/>
            <person name="Dew I."/>
            <person name="Miller J.R."/>
            <person name="Flanigan M.J."/>
            <person name="Edwards N.J."/>
            <person name="Bolanos R."/>
            <person name="Fasulo D."/>
            <person name="Halldorsson B.V."/>
            <person name="Hannenhalli S."/>
            <person name="Turner R."/>
            <person name="Yooseph S."/>
            <person name="Lu F."/>
            <person name="Nusskern D.R."/>
            <person name="Shue B.C."/>
            <person name="Zheng X.H."/>
            <person name="Zhong F."/>
            <person name="Delcher A.L."/>
            <person name="Huson D.H."/>
            <person name="Kravitz S.A."/>
            <person name="Mouchard L."/>
            <person name="Reinert K."/>
            <person name="Remington K.A."/>
            <person name="Clark A.G."/>
            <person name="Waterman M.S."/>
            <person name="Eichler E.E."/>
            <person name="Adams M.D."/>
            <person name="Hunkapiller M.W."/>
            <person name="Myers E.W."/>
            <person name="Venter J.C."/>
        </authorList>
    </citation>
    <scope>NUCLEOTIDE SEQUENCE [LARGE SCALE GENOMIC DNA]</scope>
</reference>
<reference key="5">
    <citation type="journal article" date="2004" name="Genome Res.">
        <title>The status, quality, and expansion of the NIH full-length cDNA project: the Mammalian Gene Collection (MGC).</title>
        <authorList>
            <consortium name="The MGC Project Team"/>
        </authorList>
    </citation>
    <scope>NUCLEOTIDE SEQUENCE [LARGE SCALE MRNA] (ISOFORMS 1 AND 2)</scope>
</reference>
<reference key="6">
    <citation type="journal article" date="2007" name="PLoS Comput. Biol.">
        <title>Towards complete sets of farnesylated and geranylgeranylated proteins.</title>
        <authorList>
            <person name="Maurer-Stroh S."/>
            <person name="Koranda M."/>
            <person name="Benetka W."/>
            <person name="Schneider G."/>
            <person name="Sirota F.L."/>
            <person name="Eisenhaber F."/>
        </authorList>
    </citation>
    <scope>ISOPRENYLATION AT CYS-408</scope>
</reference>
<reference key="7">
    <citation type="journal article" date="2009" name="Science">
        <title>Lysine acetylation targets protein complexes and co-regulates major cellular functions.</title>
        <authorList>
            <person name="Choudhary C."/>
            <person name="Kumar C."/>
            <person name="Gnad F."/>
            <person name="Nielsen M.L."/>
            <person name="Rehman M."/>
            <person name="Walther T.C."/>
            <person name="Olsen J.V."/>
            <person name="Mann M."/>
        </authorList>
    </citation>
    <scope>ACETYLATION [LARGE SCALE ANALYSIS] AT LYS-283</scope>
    <scope>IDENTIFICATION BY MASS SPECTROMETRY [LARGE SCALE ANALYSIS]</scope>
</reference>
<reference key="8">
    <citation type="journal article" date="2011" name="BMC Syst. Biol.">
        <title>Initial characterization of the human central proteome.</title>
        <authorList>
            <person name="Burkard T.R."/>
            <person name="Planyavsky M."/>
            <person name="Kaupe I."/>
            <person name="Breitwieser F.P."/>
            <person name="Buerckstuemmer T."/>
            <person name="Bennett K.L."/>
            <person name="Superti-Furga G."/>
            <person name="Colinge J."/>
        </authorList>
    </citation>
    <scope>IDENTIFICATION BY MASS SPECTROMETRY [LARGE SCALE ANALYSIS]</scope>
</reference>
<reference key="9">
    <citation type="journal article" date="2021" name="Dev. Cell">
        <title>The ESCRT machinery counteracts Nesprin-2G-mediated mechanical forces during nuclear envelope repair.</title>
        <authorList>
            <person name="Wallis S.S."/>
            <person name="Ventimiglia L.N."/>
            <person name="Otigbah E."/>
            <person name="Infante E."/>
            <person name="Cuesta-Geijo M.A."/>
            <person name="Kidiyoor G.R."/>
            <person name="Carbajal M.A."/>
            <person name="Fleck R.A."/>
            <person name="Foiani M."/>
            <person name="Garcia-Manyes S."/>
            <person name="Martin-Serrano J."/>
            <person name="Agromayor M."/>
        </authorList>
    </citation>
    <scope>FUNCTION</scope>
    <scope>SUBCELLULAR LOCATION</scope>
    <scope>MUTAGENESIS OF HIS-204; LEU-350 AND CYS-408</scope>
    <scope>INTERACTION WITH SYN2 AND CHMP4B</scope>
</reference>
<reference evidence="20" key="10">
    <citation type="journal article" date="2011" name="PLoS ONE">
        <title>Structure of the Bro1 domain protein BROX and functional analyses of the ALIX Bro1 domain in HIV-1 budding.</title>
        <authorList>
            <person name="Zhai Q."/>
            <person name="Landesman M.B."/>
            <person name="Robinson H."/>
            <person name="Sundquist W.I."/>
            <person name="Hill C.P."/>
        </authorList>
    </citation>
    <scope>X-RAY CRYSTALLOGRAPHY (2.50 ANGSTROMS) OF 1-401</scope>
    <scope>SUBUNIT</scope>
    <scope>INTERACTION WITH CHMP4B</scope>
</reference>
<reference evidence="14" key="11">
    <citation type="journal article" date="2011" name="Structure">
        <title>The Phe105 loop of Alix Bro1 domain plays a key role in HIV-1 release.</title>
        <authorList>
            <person name="Sette P."/>
            <person name="Mu R."/>
            <person name="Dussupt V."/>
            <person name="Jiang J."/>
            <person name="Snyder G."/>
            <person name="Smith P."/>
            <person name="Xiao T.S."/>
            <person name="Bouamr F."/>
        </authorList>
    </citation>
    <scope>X-RAY CRYSTALLOGRAPHY (1.95 ANGSTROMS) OF 2-374</scope>
</reference>
<reference evidence="15 16 17 18 19" key="12">
    <citation type="journal article" date="2012" name="Structure">
        <title>Two distinct binding modes define the interaction of Brox with the C-terminal tails of CHMP5 and CHMP4B.</title>
        <authorList>
            <person name="Mu R."/>
            <person name="Dussupt V."/>
            <person name="Jiang J."/>
            <person name="Sette P."/>
            <person name="Rudd V."/>
            <person name="Chuenchor W."/>
            <person name="Bello N.F."/>
            <person name="Bouamr F."/>
            <person name="Xiao T.S."/>
        </authorList>
    </citation>
    <scope>X-RAY CRYSTALLOGRAPHY (2.59 ANGSTROMS) OF 2-377 IN COMPLEX WITH CHMP4B OR CHMP5</scope>
</reference>
<feature type="chain" id="PRO_0000304612" description="BRO1 domain-containing protein BROX">
    <location>
        <begin position="1"/>
        <end position="408"/>
    </location>
</feature>
<feature type="propeptide" id="PRO_0000396736" description="Removed in mature form" evidence="10">
    <location>
        <begin position="409"/>
        <end position="411"/>
    </location>
</feature>
<feature type="domain" description="BRO1" evidence="1">
    <location>
        <begin position="90"/>
        <end position="408"/>
    </location>
</feature>
<feature type="region of interest" description="Disordered" evidence="2">
    <location>
        <begin position="372"/>
        <end position="411"/>
    </location>
</feature>
<feature type="compositionally biased region" description="Basic and acidic residues" evidence="2">
    <location>
        <begin position="375"/>
        <end position="404"/>
    </location>
</feature>
<feature type="modified residue" description="N6-acetyllysine" evidence="21">
    <location>
        <position position="283"/>
    </location>
</feature>
<feature type="modified residue" description="Cysteine methyl ester" evidence="11">
    <location>
        <position position="408"/>
    </location>
</feature>
<feature type="lipid moiety-binding region" description="S-farnesyl cysteine" evidence="3 4">
    <location>
        <position position="408"/>
    </location>
</feature>
<feature type="splice variant" id="VSP_055551" description="In isoform 2." evidence="8 9">
    <location>
        <begin position="103"/>
        <end position="134"/>
    </location>
</feature>
<feature type="mutagenesis site" description="Does not affect SYN2 interaction. Does not induce SYN2 ubiquitination. Does not affect recruitment to sites of rupture. Impairs NE repair." evidence="7">
    <original>H</original>
    <variation>A</variation>
    <location>
        <position position="204"/>
    </location>
</feature>
<feature type="mutagenesis site" description="Loss of SYN2 interaction. Abolishes BROX recruitment to sites of nuclear envelope (NE) rupture. Impairs NE resealing. Does not induce SYN2 ubiquitination." evidence="7">
    <original>L</original>
    <variation>A</variation>
    <location>
        <position position="350"/>
    </location>
</feature>
<feature type="mutagenesis site" description="Loss of association with the nuclear envelop. Abolishes its recruitment to rupture sites. Abolishes its repair function." evidence="7">
    <original>C</original>
    <variation>S</variation>
    <location>
        <position position="408"/>
    </location>
</feature>
<feature type="sequence conflict" description="In Ref. 1; BAF56045 and 2; BAB71331." evidence="10" ref="1 2">
    <original>I</original>
    <variation>T</variation>
    <location>
        <position position="335"/>
    </location>
</feature>
<feature type="helix" evidence="22">
    <location>
        <begin position="21"/>
        <end position="23"/>
    </location>
</feature>
<feature type="helix" evidence="22">
    <location>
        <begin position="27"/>
        <end position="46"/>
    </location>
</feature>
<feature type="helix" evidence="22">
    <location>
        <begin position="54"/>
        <end position="68"/>
    </location>
</feature>
<feature type="helix" evidence="22">
    <location>
        <begin position="69"/>
        <end position="71"/>
    </location>
</feature>
<feature type="strand" evidence="24">
    <location>
        <begin position="75"/>
        <end position="81"/>
    </location>
</feature>
<feature type="turn" evidence="22">
    <location>
        <begin position="83"/>
        <end position="86"/>
    </location>
</feature>
<feature type="strand" evidence="22">
    <location>
        <begin position="90"/>
        <end position="92"/>
    </location>
</feature>
<feature type="strand" evidence="23">
    <location>
        <begin position="95"/>
        <end position="97"/>
    </location>
</feature>
<feature type="strand" evidence="22">
    <location>
        <begin position="102"/>
        <end position="105"/>
    </location>
</feature>
<feature type="helix" evidence="22">
    <location>
        <begin position="107"/>
        <end position="130"/>
    </location>
</feature>
<feature type="helix" evidence="22">
    <location>
        <begin position="137"/>
        <end position="160"/>
    </location>
</feature>
<feature type="helix" evidence="22">
    <location>
        <begin position="162"/>
        <end position="164"/>
    </location>
</feature>
<feature type="strand" evidence="24">
    <location>
        <begin position="173"/>
        <end position="176"/>
    </location>
</feature>
<feature type="helix" evidence="22">
    <location>
        <begin position="177"/>
        <end position="201"/>
    </location>
</feature>
<feature type="helix" evidence="22">
    <location>
        <begin position="206"/>
        <end position="227"/>
    </location>
</feature>
<feature type="helix" evidence="22">
    <location>
        <begin position="232"/>
        <end position="263"/>
    </location>
</feature>
<feature type="helix" evidence="22">
    <location>
        <begin position="267"/>
        <end position="292"/>
    </location>
</feature>
<feature type="strand" evidence="24">
    <location>
        <begin position="298"/>
        <end position="301"/>
    </location>
</feature>
<feature type="helix" evidence="22">
    <location>
        <begin position="303"/>
        <end position="305"/>
    </location>
</feature>
<feature type="helix" evidence="22">
    <location>
        <begin position="307"/>
        <end position="329"/>
    </location>
</feature>
<feature type="strand" evidence="23">
    <location>
        <begin position="347"/>
        <end position="349"/>
    </location>
</feature>
<feature type="helix" evidence="22">
    <location>
        <begin position="367"/>
        <end position="371"/>
    </location>
</feature>
<feature type="helix" evidence="23">
    <location>
        <begin position="375"/>
        <end position="377"/>
    </location>
</feature>
<dbReference type="EMBL" id="AB276123">
    <property type="protein sequence ID" value="BAF56045.1"/>
    <property type="molecule type" value="mRNA"/>
</dbReference>
<dbReference type="EMBL" id="AK056983">
    <property type="protein sequence ID" value="BAB71331.1"/>
    <property type="molecule type" value="mRNA"/>
</dbReference>
<dbReference type="EMBL" id="AK315930">
    <property type="protein sequence ID" value="BAH14301.1"/>
    <property type="molecule type" value="mRNA"/>
</dbReference>
<dbReference type="EMBL" id="AL392172">
    <property type="status" value="NOT_ANNOTATED_CDS"/>
    <property type="molecule type" value="Genomic_DNA"/>
</dbReference>
<dbReference type="EMBL" id="CH471100">
    <property type="protein sequence ID" value="EAW93265.1"/>
    <property type="molecule type" value="Genomic_DNA"/>
</dbReference>
<dbReference type="EMBL" id="BC113635">
    <property type="protein sequence ID" value="AAI13636.1"/>
    <property type="molecule type" value="mRNA"/>
</dbReference>
<dbReference type="EMBL" id="BC113637">
    <property type="protein sequence ID" value="AAI13638.1"/>
    <property type="molecule type" value="mRNA"/>
</dbReference>
<dbReference type="EMBL" id="BC143811">
    <property type="protein sequence ID" value="AAI43812.1"/>
    <property type="molecule type" value="mRNA"/>
</dbReference>
<dbReference type="CCDS" id="CCDS1534.1">
    <molecule id="Q5VW32-1"/>
</dbReference>
<dbReference type="CCDS" id="CCDS73037.1">
    <molecule id="Q5VW32-2"/>
</dbReference>
<dbReference type="RefSeq" id="NP_001275508.1">
    <molecule id="Q5VW32-2"/>
    <property type="nucleotide sequence ID" value="NM_001288579.2"/>
</dbReference>
<dbReference type="RefSeq" id="NP_001275509.1">
    <molecule id="Q5VW32-2"/>
    <property type="nucleotide sequence ID" value="NM_001288580.2"/>
</dbReference>
<dbReference type="RefSeq" id="NP_001275510.1">
    <property type="nucleotide sequence ID" value="NM_001288581.1"/>
</dbReference>
<dbReference type="RefSeq" id="NP_001362590.1">
    <molecule id="Q5VW32-1"/>
    <property type="nucleotide sequence ID" value="NM_001375661.1"/>
</dbReference>
<dbReference type="RefSeq" id="NP_653296.2">
    <molecule id="Q5VW32-1"/>
    <property type="nucleotide sequence ID" value="NM_144695.4"/>
</dbReference>
<dbReference type="RefSeq" id="XP_005273122.2">
    <property type="nucleotide sequence ID" value="XM_005273065.2"/>
</dbReference>
<dbReference type="RefSeq" id="XP_011507516.1">
    <molecule id="Q5VW32-1"/>
    <property type="nucleotide sequence ID" value="XM_011509214.4"/>
</dbReference>
<dbReference type="RefSeq" id="XP_016855863.1">
    <molecule id="Q5VW32-1"/>
    <property type="nucleotide sequence ID" value="XM_017000374.3"/>
</dbReference>
<dbReference type="RefSeq" id="XP_047302809.1">
    <molecule id="Q5VW32-1"/>
    <property type="nucleotide sequence ID" value="XM_047446853.1"/>
</dbReference>
<dbReference type="RefSeq" id="XP_047302820.1">
    <molecule id="Q5VW32-1"/>
    <property type="nucleotide sequence ID" value="XM_047446864.1"/>
</dbReference>
<dbReference type="RefSeq" id="XP_047302835.1">
    <molecule id="Q5VW32-1"/>
    <property type="nucleotide sequence ID" value="XM_047446879.1"/>
</dbReference>
<dbReference type="RefSeq" id="XP_047302842.1">
    <molecule id="Q5VW32-1"/>
    <property type="nucleotide sequence ID" value="XM_047446886.1"/>
</dbReference>
<dbReference type="RefSeq" id="XP_054190537.1">
    <molecule id="Q5VW32-1"/>
    <property type="nucleotide sequence ID" value="XM_054334562.1"/>
</dbReference>
<dbReference type="RefSeq" id="XP_054190538.1">
    <molecule id="Q5VW32-1"/>
    <property type="nucleotide sequence ID" value="XM_054334563.1"/>
</dbReference>
<dbReference type="RefSeq" id="XP_054190539.1">
    <molecule id="Q5VW32-1"/>
    <property type="nucleotide sequence ID" value="XM_054334564.1"/>
</dbReference>
<dbReference type="RefSeq" id="XP_054190540.1">
    <molecule id="Q5VW32-1"/>
    <property type="nucleotide sequence ID" value="XM_054334565.1"/>
</dbReference>
<dbReference type="RefSeq" id="XP_054190541.1">
    <molecule id="Q5VW32-1"/>
    <property type="nucleotide sequence ID" value="XM_054334566.1"/>
</dbReference>
<dbReference type="RefSeq" id="XP_054190542.1">
    <molecule id="Q5VW32-1"/>
    <property type="nucleotide sequence ID" value="XM_054334567.1"/>
</dbReference>
<dbReference type="PDB" id="3R9M">
    <property type="method" value="X-ray"/>
    <property type="resolution" value="1.95 A"/>
    <property type="chains" value="A=2-374"/>
</dbReference>
<dbReference type="PDB" id="3ULY">
    <property type="method" value="X-ray"/>
    <property type="resolution" value="2.60 A"/>
    <property type="chains" value="A=2-408"/>
</dbReference>
<dbReference type="PDB" id="3UM0">
    <property type="method" value="X-ray"/>
    <property type="resolution" value="3.10 A"/>
    <property type="chains" value="A=2-408"/>
</dbReference>
<dbReference type="PDB" id="3UM1">
    <property type="method" value="X-ray"/>
    <property type="resolution" value="2.71 A"/>
    <property type="chains" value="A/D=2-377"/>
</dbReference>
<dbReference type="PDB" id="3UM2">
    <property type="method" value="X-ray"/>
    <property type="resolution" value="2.59 A"/>
    <property type="chains" value="A/D=2-377"/>
</dbReference>
<dbReference type="PDB" id="3UM3">
    <property type="method" value="X-ray"/>
    <property type="resolution" value="3.80 A"/>
    <property type="chains" value="A=2-411"/>
</dbReference>
<dbReference type="PDB" id="3ZXP">
    <property type="method" value="X-ray"/>
    <property type="resolution" value="2.50 A"/>
    <property type="chains" value="A/B/C=1-401"/>
</dbReference>
<dbReference type="PDBsum" id="3R9M"/>
<dbReference type="PDBsum" id="3ULY"/>
<dbReference type="PDBsum" id="3UM0"/>
<dbReference type="PDBsum" id="3UM1"/>
<dbReference type="PDBsum" id="3UM2"/>
<dbReference type="PDBsum" id="3UM3"/>
<dbReference type="PDBsum" id="3ZXP"/>
<dbReference type="SMR" id="Q5VW32"/>
<dbReference type="BioGRID" id="127145">
    <property type="interactions" value="41"/>
</dbReference>
<dbReference type="DIP" id="DIP-59406N"/>
<dbReference type="FunCoup" id="Q5VW32">
    <property type="interactions" value="2127"/>
</dbReference>
<dbReference type="IntAct" id="Q5VW32">
    <property type="interactions" value="16"/>
</dbReference>
<dbReference type="MINT" id="Q5VW32"/>
<dbReference type="STRING" id="9606.ENSP00000343742"/>
<dbReference type="GlyGen" id="Q5VW32">
    <property type="glycosylation" value="2 sites, 1 O-linked glycan (1 site)"/>
</dbReference>
<dbReference type="iPTMnet" id="Q5VW32"/>
<dbReference type="PhosphoSitePlus" id="Q5VW32"/>
<dbReference type="SwissPalm" id="Q5VW32"/>
<dbReference type="BioMuta" id="BROX"/>
<dbReference type="DMDM" id="74747339"/>
<dbReference type="jPOST" id="Q5VW32"/>
<dbReference type="MassIVE" id="Q5VW32"/>
<dbReference type="PaxDb" id="9606-ENSP00000343742"/>
<dbReference type="PeptideAtlas" id="Q5VW32"/>
<dbReference type="ProteomicsDB" id="65514">
    <molecule id="Q5VW32-1"/>
</dbReference>
<dbReference type="ProteomicsDB" id="7028"/>
<dbReference type="Pumba" id="Q5VW32"/>
<dbReference type="Antibodypedia" id="34631">
    <property type="antibodies" value="26 antibodies from 13 providers"/>
</dbReference>
<dbReference type="DNASU" id="148362"/>
<dbReference type="Ensembl" id="ENST00000340934.10">
    <molecule id="Q5VW32-1"/>
    <property type="protein sequence ID" value="ENSP00000343742.5"/>
    <property type="gene ID" value="ENSG00000162819.12"/>
</dbReference>
<dbReference type="Ensembl" id="ENST00000539697.5">
    <molecule id="Q5VW32-2"/>
    <property type="protein sequence ID" value="ENSP00000441080.1"/>
    <property type="gene ID" value="ENSG00000162819.12"/>
</dbReference>
<dbReference type="Ensembl" id="ENST00000612948.4">
    <molecule id="Q5VW32-2"/>
    <property type="protein sequence ID" value="ENSP00000478496.1"/>
    <property type="gene ID" value="ENSG00000162819.12"/>
</dbReference>
<dbReference type="GeneID" id="148362"/>
<dbReference type="KEGG" id="hsa:148362"/>
<dbReference type="MANE-Select" id="ENST00000340934.10">
    <property type="protein sequence ID" value="ENSP00000343742.5"/>
    <property type="RefSeq nucleotide sequence ID" value="NM_144695.4"/>
    <property type="RefSeq protein sequence ID" value="NP_653296.2"/>
</dbReference>
<dbReference type="UCSC" id="uc001hns.2">
    <molecule id="Q5VW32-1"/>
    <property type="organism name" value="human"/>
</dbReference>
<dbReference type="AGR" id="HGNC:26512"/>
<dbReference type="CTD" id="148362"/>
<dbReference type="DisGeNET" id="148362"/>
<dbReference type="GeneCards" id="BROX"/>
<dbReference type="HGNC" id="HGNC:26512">
    <property type="gene designation" value="BROX"/>
</dbReference>
<dbReference type="HPA" id="ENSG00000162819">
    <property type="expression patterns" value="Low tissue specificity"/>
</dbReference>
<dbReference type="neXtProt" id="NX_Q5VW32"/>
<dbReference type="OpenTargets" id="ENSG00000162819"/>
<dbReference type="PharmGKB" id="PA142672509"/>
<dbReference type="VEuPathDB" id="HostDB:ENSG00000162819"/>
<dbReference type="eggNOG" id="ENOG502QQBR">
    <property type="taxonomic scope" value="Eukaryota"/>
</dbReference>
<dbReference type="GeneTree" id="ENSGT00390000006681"/>
<dbReference type="HOGENOM" id="CLU_056561_0_0_1"/>
<dbReference type="InParanoid" id="Q5VW32"/>
<dbReference type="OMA" id="YNYCGEN"/>
<dbReference type="OrthoDB" id="10266451at2759"/>
<dbReference type="PAN-GO" id="Q5VW32">
    <property type="GO annotations" value="0 GO annotations based on evolutionary models"/>
</dbReference>
<dbReference type="PhylomeDB" id="Q5VW32"/>
<dbReference type="TreeFam" id="TF314743"/>
<dbReference type="PathwayCommons" id="Q5VW32"/>
<dbReference type="SignaLink" id="Q5VW32"/>
<dbReference type="BioGRID-ORCS" id="148362">
    <property type="hits" value="6 hits in 1155 CRISPR screens"/>
</dbReference>
<dbReference type="ChiTaRS" id="BROX">
    <property type="organism name" value="human"/>
</dbReference>
<dbReference type="EvolutionaryTrace" id="Q5VW32"/>
<dbReference type="GenomeRNAi" id="148362"/>
<dbReference type="Pharos" id="Q5VW32">
    <property type="development level" value="Tbio"/>
</dbReference>
<dbReference type="PRO" id="PR:Q5VW32"/>
<dbReference type="Proteomes" id="UP000005640">
    <property type="component" value="Chromosome 1"/>
</dbReference>
<dbReference type="RNAct" id="Q5VW32">
    <property type="molecule type" value="protein"/>
</dbReference>
<dbReference type="Bgee" id="ENSG00000162819">
    <property type="expression patterns" value="Expressed in ileal mucosa and 189 other cell types or tissues"/>
</dbReference>
<dbReference type="ExpressionAtlas" id="Q5VW32">
    <property type="expression patterns" value="baseline and differential"/>
</dbReference>
<dbReference type="GO" id="GO:0070062">
    <property type="term" value="C:extracellular exosome"/>
    <property type="evidence" value="ECO:0007005"/>
    <property type="project" value="UniProtKB"/>
</dbReference>
<dbReference type="GO" id="GO:0005635">
    <property type="term" value="C:nuclear envelope"/>
    <property type="evidence" value="ECO:0000314"/>
    <property type="project" value="UniProtKB"/>
</dbReference>
<dbReference type="GO" id="GO:0031965">
    <property type="term" value="C:nuclear membrane"/>
    <property type="evidence" value="ECO:0007669"/>
    <property type="project" value="UniProtKB-SubCell"/>
</dbReference>
<dbReference type="GO" id="GO:0007084">
    <property type="term" value="P:mitotic nuclear membrane reassembly"/>
    <property type="evidence" value="ECO:0000315"/>
    <property type="project" value="UniProtKB"/>
</dbReference>
<dbReference type="CDD" id="cd09243">
    <property type="entry name" value="BRO1_Brox_like"/>
    <property type="match status" value="1"/>
</dbReference>
<dbReference type="FunFam" id="1.25.40.280:FF:000004">
    <property type="entry name" value="BRO1 domain-containing protein BROX"/>
    <property type="match status" value="1"/>
</dbReference>
<dbReference type="Gene3D" id="1.25.40.280">
    <property type="entry name" value="alix/aip1 like domains"/>
    <property type="match status" value="1"/>
</dbReference>
<dbReference type="InterPro" id="IPR004328">
    <property type="entry name" value="BRO1_dom"/>
</dbReference>
<dbReference type="InterPro" id="IPR038499">
    <property type="entry name" value="BRO1_sf"/>
</dbReference>
<dbReference type="InterPro" id="IPR038898">
    <property type="entry name" value="BROX"/>
</dbReference>
<dbReference type="PANTHER" id="PTHR23032">
    <property type="entry name" value="BRO1 DOMAIN-CONTAINING PROTEIN BROX"/>
    <property type="match status" value="1"/>
</dbReference>
<dbReference type="PANTHER" id="PTHR23032:SF13">
    <property type="entry name" value="BRO1 DOMAIN-CONTAINING PROTEIN BROX"/>
    <property type="match status" value="1"/>
</dbReference>
<dbReference type="Pfam" id="PF03097">
    <property type="entry name" value="BRO1"/>
    <property type="match status" value="1"/>
</dbReference>
<dbReference type="SMART" id="SM01041">
    <property type="entry name" value="BRO1"/>
    <property type="match status" value="1"/>
</dbReference>
<dbReference type="PROSITE" id="PS51180">
    <property type="entry name" value="BRO1"/>
    <property type="match status" value="1"/>
</dbReference>
<proteinExistence type="evidence at protein level"/>
<keyword id="KW-0002">3D-structure</keyword>
<keyword id="KW-0007">Acetylation</keyword>
<keyword id="KW-0025">Alternative splicing</keyword>
<keyword id="KW-0449">Lipoprotein</keyword>
<keyword id="KW-0472">Membrane</keyword>
<keyword id="KW-0488">Methylation</keyword>
<keyword id="KW-0539">Nucleus</keyword>
<keyword id="KW-0636">Prenylation</keyword>
<keyword id="KW-1267">Proteomics identification</keyword>
<keyword id="KW-1185">Reference proteome</keyword>